<evidence type="ECO:0000250" key="1">
    <source>
        <dbReference type="UniProtKB" id="P78330"/>
    </source>
</evidence>
<evidence type="ECO:0000305" key="2"/>
<sequence>MVSHSELRKLFYSADAVCFDVDSTVIREEGIDELAKICGVEDAVSEMTRRAMGGAVPFKAALTERLALIQPSREQVQRLIAEQPPHLTPGIRELVSRLQERNVQVFLISGGFRSIVEHVASKLNIPATNVFANRLKFYFNGEYAGFDETQPTAESGGKGKVIKLLKEKFHFKKIIMIGDGATDMEACPPADAFIGFGGNVIRQQVKDNAKWYITDFVELLGELEE</sequence>
<protein>
    <recommendedName>
        <fullName evidence="1">Phosphoserine phosphatase</fullName>
        <shortName evidence="1">PSP</shortName>
        <shortName evidence="1">PSPase</shortName>
        <ecNumber evidence="1">3.1.3.3</ecNumber>
    </recommendedName>
    <alternativeName>
        <fullName evidence="1">O-phosphoserine phosphohydrolase</fullName>
    </alternativeName>
</protein>
<name>SERB_PONAB</name>
<accession>Q5RB83</accession>
<proteinExistence type="evidence at transcript level"/>
<comment type="function">
    <text evidence="1">Catalyzes the last irreversible step in the biosynthesis of L-serine from carbohydrates, the dephosphorylation of O-phospho-L-serine to L-serine. L-serine can then be used in protein synthesis, to produce other amino acids, in nucleotide metabolism or in glutathione synthesis, or can be racemized to D-serine, a neuromodulator. May also act on O-phospho-D-serine.</text>
</comment>
<comment type="catalytic activity">
    <reaction evidence="1">
        <text>O-phospho-L-serine + H2O = L-serine + phosphate</text>
        <dbReference type="Rhea" id="RHEA:21208"/>
        <dbReference type="ChEBI" id="CHEBI:15377"/>
        <dbReference type="ChEBI" id="CHEBI:33384"/>
        <dbReference type="ChEBI" id="CHEBI:43474"/>
        <dbReference type="ChEBI" id="CHEBI:57524"/>
        <dbReference type="EC" id="3.1.3.3"/>
    </reaction>
    <physiologicalReaction direction="left-to-right" evidence="1">
        <dbReference type="Rhea" id="RHEA:21209"/>
    </physiologicalReaction>
</comment>
<comment type="catalytic activity">
    <reaction evidence="1">
        <text>O-phospho-D-serine + H2O = D-serine + phosphate</text>
        <dbReference type="Rhea" id="RHEA:24873"/>
        <dbReference type="ChEBI" id="CHEBI:15377"/>
        <dbReference type="ChEBI" id="CHEBI:35247"/>
        <dbReference type="ChEBI" id="CHEBI:43474"/>
        <dbReference type="ChEBI" id="CHEBI:58680"/>
        <dbReference type="EC" id="3.1.3.3"/>
    </reaction>
    <physiologicalReaction direction="left-to-right" evidence="1">
        <dbReference type="Rhea" id="RHEA:24874"/>
    </physiologicalReaction>
</comment>
<comment type="cofactor">
    <cofactor evidence="1">
        <name>Mg(2+)</name>
        <dbReference type="ChEBI" id="CHEBI:18420"/>
    </cofactor>
    <text evidence="1">Binds 1 Mg(2+) ion per subunit.</text>
</comment>
<comment type="pathway">
    <text evidence="1">Amino-acid biosynthesis; L-serine biosynthesis; L-serine from 3-phospho-D-glycerate: step 3/3.</text>
</comment>
<comment type="subunit">
    <text evidence="1">Homodimer.</text>
</comment>
<comment type="subcellular location">
    <subcellularLocation>
        <location evidence="1">Cytoplasm</location>
        <location evidence="1">Cytosol</location>
    </subcellularLocation>
</comment>
<comment type="similarity">
    <text evidence="2">Belongs to the HAD-like hydrolase superfamily. SerB family.</text>
</comment>
<reference key="1">
    <citation type="submission" date="2004-11" db="EMBL/GenBank/DDBJ databases">
        <authorList>
            <consortium name="The German cDNA consortium"/>
        </authorList>
    </citation>
    <scope>NUCLEOTIDE SEQUENCE [LARGE SCALE MRNA]</scope>
    <source>
        <tissue>Heart</tissue>
    </source>
</reference>
<gene>
    <name evidence="1" type="primary">PSPH</name>
</gene>
<dbReference type="EC" id="3.1.3.3" evidence="1"/>
<dbReference type="EMBL" id="CR858770">
    <property type="protein sequence ID" value="CAH90977.1"/>
    <property type="molecule type" value="mRNA"/>
</dbReference>
<dbReference type="RefSeq" id="NP_001128794.1">
    <property type="nucleotide sequence ID" value="NM_001135322.1"/>
</dbReference>
<dbReference type="SMR" id="Q5RB83"/>
<dbReference type="FunCoup" id="Q5RB83">
    <property type="interactions" value="1129"/>
</dbReference>
<dbReference type="STRING" id="9601.ENSPPYP00000019666"/>
<dbReference type="GeneID" id="100172123"/>
<dbReference type="CTD" id="5723"/>
<dbReference type="eggNOG" id="KOG1615">
    <property type="taxonomic scope" value="Eukaryota"/>
</dbReference>
<dbReference type="InParanoid" id="Q5RB83"/>
<dbReference type="UniPathway" id="UPA00135">
    <property type="reaction ID" value="UER00198"/>
</dbReference>
<dbReference type="Proteomes" id="UP000001595">
    <property type="component" value="Unplaced"/>
</dbReference>
<dbReference type="GO" id="GO:0005829">
    <property type="term" value="C:cytosol"/>
    <property type="evidence" value="ECO:0007669"/>
    <property type="project" value="UniProtKB-SubCell"/>
</dbReference>
<dbReference type="GO" id="GO:0036424">
    <property type="term" value="F:L-phosphoserine phosphatase activity"/>
    <property type="evidence" value="ECO:0000250"/>
    <property type="project" value="UniProtKB"/>
</dbReference>
<dbReference type="GO" id="GO:0000287">
    <property type="term" value="F:magnesium ion binding"/>
    <property type="evidence" value="ECO:0000250"/>
    <property type="project" value="UniProtKB"/>
</dbReference>
<dbReference type="GO" id="GO:0006564">
    <property type="term" value="P:L-serine biosynthetic process"/>
    <property type="evidence" value="ECO:0000250"/>
    <property type="project" value="UniProtKB"/>
</dbReference>
<dbReference type="GO" id="GO:0006563">
    <property type="term" value="P:L-serine metabolic process"/>
    <property type="evidence" value="ECO:0000250"/>
    <property type="project" value="UniProtKB"/>
</dbReference>
<dbReference type="CDD" id="cd04309">
    <property type="entry name" value="HAD_PSP_eu"/>
    <property type="match status" value="1"/>
</dbReference>
<dbReference type="FunFam" id="3.40.50.1000:FF:000077">
    <property type="entry name" value="Phosphoserine phosphatase, chloroplastic"/>
    <property type="match status" value="1"/>
</dbReference>
<dbReference type="FunFam" id="3.40.50.1000:FF:000114">
    <property type="entry name" value="Phosphoserine phosphatase, chloroplastic"/>
    <property type="match status" value="1"/>
</dbReference>
<dbReference type="Gene3D" id="3.40.50.1000">
    <property type="entry name" value="HAD superfamily/HAD-like"/>
    <property type="match status" value="2"/>
</dbReference>
<dbReference type="InterPro" id="IPR050582">
    <property type="entry name" value="HAD-like_SerB"/>
</dbReference>
<dbReference type="InterPro" id="IPR036412">
    <property type="entry name" value="HAD-like_sf"/>
</dbReference>
<dbReference type="InterPro" id="IPR023214">
    <property type="entry name" value="HAD_sf"/>
</dbReference>
<dbReference type="InterPro" id="IPR004469">
    <property type="entry name" value="PSP"/>
</dbReference>
<dbReference type="NCBIfam" id="TIGR01488">
    <property type="entry name" value="HAD-SF-IB"/>
    <property type="match status" value="1"/>
</dbReference>
<dbReference type="NCBIfam" id="TIGR00338">
    <property type="entry name" value="serB"/>
    <property type="match status" value="1"/>
</dbReference>
<dbReference type="PANTHER" id="PTHR43344">
    <property type="entry name" value="PHOSPHOSERINE PHOSPHATASE"/>
    <property type="match status" value="1"/>
</dbReference>
<dbReference type="PANTHER" id="PTHR43344:SF2">
    <property type="entry name" value="PHOSPHOSERINE PHOSPHATASE"/>
    <property type="match status" value="1"/>
</dbReference>
<dbReference type="Pfam" id="PF00702">
    <property type="entry name" value="Hydrolase"/>
    <property type="match status" value="1"/>
</dbReference>
<dbReference type="SFLD" id="SFLDG01137">
    <property type="entry name" value="C1.6.1:_Phosphoserine_Phosphat"/>
    <property type="match status" value="1"/>
</dbReference>
<dbReference type="SFLD" id="SFLDG01136">
    <property type="entry name" value="C1.6:_Phosphoserine_Phosphatas"/>
    <property type="match status" value="1"/>
</dbReference>
<dbReference type="SUPFAM" id="SSF56784">
    <property type="entry name" value="HAD-like"/>
    <property type="match status" value="1"/>
</dbReference>
<feature type="chain" id="PRO_0000156881" description="Phosphoserine phosphatase">
    <location>
        <begin position="1"/>
        <end position="225"/>
    </location>
</feature>
<feature type="active site" description="Nucleophile" evidence="1">
    <location>
        <position position="20"/>
    </location>
</feature>
<feature type="active site" description="Proton donor" evidence="1">
    <location>
        <position position="22"/>
    </location>
</feature>
<feature type="binding site" evidence="1">
    <location>
        <begin position="20"/>
        <end position="22"/>
    </location>
    <ligand>
        <name>L-serine</name>
        <dbReference type="ChEBI" id="CHEBI:33384"/>
    </ligand>
</feature>
<feature type="binding site" evidence="1">
    <location>
        <position position="20"/>
    </location>
    <ligand>
        <name>Mg(2+)</name>
        <dbReference type="ChEBI" id="CHEBI:18420"/>
    </ligand>
</feature>
<feature type="binding site" evidence="1">
    <location>
        <position position="22"/>
    </location>
    <ligand>
        <name>Mg(2+)</name>
        <dbReference type="ChEBI" id="CHEBI:18420"/>
    </ligand>
</feature>
<feature type="binding site" evidence="1">
    <location>
        <position position="52"/>
    </location>
    <ligand>
        <name>O-phospho-L-serine</name>
        <dbReference type="ChEBI" id="CHEBI:57524"/>
    </ligand>
</feature>
<feature type="binding site" evidence="1">
    <location>
        <position position="53"/>
    </location>
    <ligand>
        <name>phosphate</name>
        <dbReference type="ChEBI" id="CHEBI:43474"/>
    </ligand>
</feature>
<feature type="binding site" evidence="1">
    <location>
        <begin position="109"/>
        <end position="111"/>
    </location>
    <ligand>
        <name>L-serine</name>
        <dbReference type="ChEBI" id="CHEBI:33384"/>
    </ligand>
</feature>
<feature type="binding site" evidence="1">
    <location>
        <begin position="109"/>
        <end position="111"/>
    </location>
    <ligand>
        <name>O-phospho-L-serine</name>
        <dbReference type="ChEBI" id="CHEBI:57524"/>
    </ligand>
</feature>
<feature type="binding site" evidence="1">
    <location>
        <position position="158"/>
    </location>
    <ligand>
        <name>L-serine</name>
        <dbReference type="ChEBI" id="CHEBI:33384"/>
    </ligand>
</feature>
<feature type="binding site" evidence="1">
    <location>
        <position position="158"/>
    </location>
    <ligand>
        <name>O-phospho-L-serine</name>
        <dbReference type="ChEBI" id="CHEBI:57524"/>
    </ligand>
</feature>
<feature type="binding site" evidence="1">
    <location>
        <position position="179"/>
    </location>
    <ligand>
        <name>Mg(2+)</name>
        <dbReference type="ChEBI" id="CHEBI:18420"/>
    </ligand>
</feature>
<feature type="binding site" evidence="1">
    <location>
        <position position="182"/>
    </location>
    <ligand>
        <name>O-phospho-L-serine</name>
        <dbReference type="ChEBI" id="CHEBI:57524"/>
    </ligand>
</feature>
<feature type="binding site" evidence="1">
    <location>
        <position position="182"/>
    </location>
    <ligand>
        <name>phosphate</name>
        <dbReference type="ChEBI" id="CHEBI:43474"/>
    </ligand>
</feature>
<feature type="modified residue" description="N-acetylmethionine" evidence="1">
    <location>
        <position position="1"/>
    </location>
</feature>
<organism>
    <name type="scientific">Pongo abelii</name>
    <name type="common">Sumatran orangutan</name>
    <name type="synonym">Pongo pygmaeus abelii</name>
    <dbReference type="NCBI Taxonomy" id="9601"/>
    <lineage>
        <taxon>Eukaryota</taxon>
        <taxon>Metazoa</taxon>
        <taxon>Chordata</taxon>
        <taxon>Craniata</taxon>
        <taxon>Vertebrata</taxon>
        <taxon>Euteleostomi</taxon>
        <taxon>Mammalia</taxon>
        <taxon>Eutheria</taxon>
        <taxon>Euarchontoglires</taxon>
        <taxon>Primates</taxon>
        <taxon>Haplorrhini</taxon>
        <taxon>Catarrhini</taxon>
        <taxon>Hominidae</taxon>
        <taxon>Pongo</taxon>
    </lineage>
</organism>
<keyword id="KW-0007">Acetylation</keyword>
<keyword id="KW-0028">Amino-acid biosynthesis</keyword>
<keyword id="KW-0963">Cytoplasm</keyword>
<keyword id="KW-0378">Hydrolase</keyword>
<keyword id="KW-0460">Magnesium</keyword>
<keyword id="KW-0479">Metal-binding</keyword>
<keyword id="KW-1185">Reference proteome</keyword>
<keyword id="KW-0718">Serine biosynthesis</keyword>